<feature type="chain" id="PRO_1000214070" description="Sialic acid transporter NanT">
    <location>
        <begin position="1"/>
        <end position="510"/>
    </location>
</feature>
<feature type="transmembrane region" description="Helical" evidence="1">
    <location>
        <begin position="35"/>
        <end position="55"/>
    </location>
</feature>
<feature type="transmembrane region" description="Helical" evidence="1">
    <location>
        <begin position="72"/>
        <end position="92"/>
    </location>
</feature>
<feature type="transmembrane region" description="Helical" evidence="1">
    <location>
        <begin position="99"/>
        <end position="119"/>
    </location>
</feature>
<feature type="transmembrane region" description="Helical" evidence="1">
    <location>
        <begin position="120"/>
        <end position="140"/>
    </location>
</feature>
<feature type="transmembrane region" description="Helical" evidence="1">
    <location>
        <begin position="161"/>
        <end position="181"/>
    </location>
</feature>
<feature type="transmembrane region" description="Helical" evidence="1">
    <location>
        <begin position="183"/>
        <end position="203"/>
    </location>
</feature>
<feature type="transmembrane region" description="Helical" evidence="1">
    <location>
        <begin position="240"/>
        <end position="260"/>
    </location>
</feature>
<feature type="transmembrane region" description="Helical" evidence="1">
    <location>
        <begin position="262"/>
        <end position="282"/>
    </location>
</feature>
<feature type="transmembrane region" description="Helical" evidence="1">
    <location>
        <begin position="295"/>
        <end position="315"/>
    </location>
</feature>
<feature type="transmembrane region" description="Helical" evidence="1">
    <location>
        <begin position="330"/>
        <end position="350"/>
    </location>
</feature>
<feature type="transmembrane region" description="Helical" evidence="1">
    <location>
        <begin position="371"/>
        <end position="391"/>
    </location>
</feature>
<feature type="transmembrane region" description="Helical" evidence="1">
    <location>
        <begin position="392"/>
        <end position="412"/>
    </location>
</feature>
<feature type="transmembrane region" description="Helical" evidence="1">
    <location>
        <begin position="418"/>
        <end position="438"/>
    </location>
</feature>
<feature type="transmembrane region" description="Helical" evidence="1">
    <location>
        <begin position="449"/>
        <end position="469"/>
    </location>
</feature>
<protein>
    <recommendedName>
        <fullName evidence="1">Sialic acid transporter NanT</fullName>
    </recommendedName>
    <alternativeName>
        <fullName evidence="1">Sialic acid permease</fullName>
    </alternativeName>
    <alternativeName>
        <fullName evidence="1">Sialic acid/H(+) symporter</fullName>
    </alternativeName>
</protein>
<name>NANT_YERP3</name>
<gene>
    <name evidence="1" type="primary">nanT</name>
    <name type="ordered locus">YpsIP31758_1298</name>
</gene>
<comment type="function">
    <text evidence="1">Catalyzes the proton-dependent transport of sialic acid.</text>
</comment>
<comment type="catalytic activity">
    <reaction evidence="1">
        <text>N-acetylneuraminate(in) + H(+)(in) = N-acetylneuraminate(out) + H(+)(out)</text>
        <dbReference type="Rhea" id="RHEA:28987"/>
        <dbReference type="ChEBI" id="CHEBI:15378"/>
        <dbReference type="ChEBI" id="CHEBI:35418"/>
    </reaction>
</comment>
<comment type="subcellular location">
    <subcellularLocation>
        <location evidence="1">Cell inner membrane</location>
        <topology evidence="1">Multi-pass membrane protein</topology>
    </subcellularLocation>
</comment>
<comment type="similarity">
    <text evidence="1">Belongs to the major facilitator superfamily. Sialate:H(+) symporter (SHS) (TC 2.A.1.12) family.</text>
</comment>
<organism>
    <name type="scientific">Yersinia pseudotuberculosis serotype O:1b (strain IP 31758)</name>
    <dbReference type="NCBI Taxonomy" id="349747"/>
    <lineage>
        <taxon>Bacteria</taxon>
        <taxon>Pseudomonadati</taxon>
        <taxon>Pseudomonadota</taxon>
        <taxon>Gammaproteobacteria</taxon>
        <taxon>Enterobacterales</taxon>
        <taxon>Yersiniaceae</taxon>
        <taxon>Yersinia</taxon>
    </lineage>
</organism>
<reference key="1">
    <citation type="journal article" date="2007" name="PLoS Genet.">
        <title>The complete genome sequence of Yersinia pseudotuberculosis IP31758, the causative agent of Far East scarlet-like fever.</title>
        <authorList>
            <person name="Eppinger M."/>
            <person name="Rosovitz M.J."/>
            <person name="Fricke W.F."/>
            <person name="Rasko D.A."/>
            <person name="Kokorina G."/>
            <person name="Fayolle C."/>
            <person name="Lindler L.E."/>
            <person name="Carniel E."/>
            <person name="Ravel J."/>
        </authorList>
    </citation>
    <scope>NUCLEOTIDE SEQUENCE [LARGE SCALE GENOMIC DNA]</scope>
    <source>
        <strain>IP 31758</strain>
    </source>
</reference>
<accession>A7FG99</accession>
<sequence length="510" mass="55262">MSISVGPSREDKPLSGGAKPPRWYKQLTPAQWKAFVAAWIGYALDGFDFVLITLVLTDIKQEFGLTLIQATSLISAAFISRWFGGLVLGAMGDRYGRKLAMITSIVLFSFGTLACGLAPGYTTLFIARLIIGIGMAGEYGSSSTYVMESWPKNMRNKASGFLISGFSIGAVLAAQAYSYVVPAFGWRMLFYIGLLPIIFALWLRKNLPEAEDWEKAQSKQKKGKQVTDRNMVDILYRSHLSYLNIGLTIFAAVSLYLCFTGMVSTLLVVVLGILCAAIFIYFMVQTSGDRWPTGVMLMVVVFCAFLYSWPIQALLPTYLKMDLGYDPHTVGNILFFSGFGAAVGCCVGGFLGDWLGTRKAYVTSLLISQLLIIPLFAIQGSSILFLGGLLFLQQMLGQGIAGLLPKLLGGYFDTEQRAAGLGFTYNVGALGGALAPILGASIAQHLSLGTALGSLSFSLTFVVILLIGFDMPSRVQRWVRPSGLRMVDAIDGKPFSGAITAQHARVVTQK</sequence>
<evidence type="ECO:0000255" key="1">
    <source>
        <dbReference type="HAMAP-Rule" id="MF_01238"/>
    </source>
</evidence>
<dbReference type="EMBL" id="CP000720">
    <property type="protein sequence ID" value="ABS46842.1"/>
    <property type="molecule type" value="Genomic_DNA"/>
</dbReference>
<dbReference type="RefSeq" id="WP_002231046.1">
    <property type="nucleotide sequence ID" value="NC_009708.1"/>
</dbReference>
<dbReference type="SMR" id="A7FG99"/>
<dbReference type="KEGG" id="ypi:YpsIP31758_1298"/>
<dbReference type="HOGENOM" id="CLU_001265_46_8_6"/>
<dbReference type="Proteomes" id="UP000002412">
    <property type="component" value="Chromosome"/>
</dbReference>
<dbReference type="GO" id="GO:0005886">
    <property type="term" value="C:plasma membrane"/>
    <property type="evidence" value="ECO:0007669"/>
    <property type="project" value="UniProtKB-SubCell"/>
</dbReference>
<dbReference type="GO" id="GO:0046943">
    <property type="term" value="F:carboxylic acid transmembrane transporter activity"/>
    <property type="evidence" value="ECO:0007669"/>
    <property type="project" value="TreeGrafter"/>
</dbReference>
<dbReference type="GO" id="GO:0015538">
    <property type="term" value="F:sialic acid:proton symporter activity"/>
    <property type="evidence" value="ECO:0007669"/>
    <property type="project" value="UniProtKB-UniRule"/>
</dbReference>
<dbReference type="CDD" id="cd17316">
    <property type="entry name" value="MFS_SV2_like"/>
    <property type="match status" value="1"/>
</dbReference>
<dbReference type="FunFam" id="1.20.1250.20:FF:000027">
    <property type="entry name" value="Sialic acid transporter NanT"/>
    <property type="match status" value="1"/>
</dbReference>
<dbReference type="FunFam" id="1.20.1250.20:FF:000038">
    <property type="entry name" value="Sialic acid transporter NanT"/>
    <property type="match status" value="1"/>
</dbReference>
<dbReference type="Gene3D" id="1.20.1250.20">
    <property type="entry name" value="MFS general substrate transporter like domains"/>
    <property type="match status" value="2"/>
</dbReference>
<dbReference type="HAMAP" id="MF_01238">
    <property type="entry name" value="MFS_NanT"/>
    <property type="match status" value="1"/>
</dbReference>
<dbReference type="InterPro" id="IPR011701">
    <property type="entry name" value="MFS"/>
</dbReference>
<dbReference type="InterPro" id="IPR020846">
    <property type="entry name" value="MFS_dom"/>
</dbReference>
<dbReference type="InterPro" id="IPR036259">
    <property type="entry name" value="MFS_trans_sf"/>
</dbReference>
<dbReference type="InterPro" id="IPR004742">
    <property type="entry name" value="SA_transporter"/>
</dbReference>
<dbReference type="NCBIfam" id="NF003024">
    <property type="entry name" value="PRK03893.1"/>
    <property type="match status" value="1"/>
</dbReference>
<dbReference type="PANTHER" id="PTHR23508">
    <property type="entry name" value="CARBOXYLIC ACID TRANSPORTER PROTEIN HOMOLOG"/>
    <property type="match status" value="1"/>
</dbReference>
<dbReference type="PANTHER" id="PTHR23508:SF3">
    <property type="entry name" value="SIALIC ACID TRANSPORTER NANT"/>
    <property type="match status" value="1"/>
</dbReference>
<dbReference type="Pfam" id="PF07690">
    <property type="entry name" value="MFS_1"/>
    <property type="match status" value="1"/>
</dbReference>
<dbReference type="SUPFAM" id="SSF103473">
    <property type="entry name" value="MFS general substrate transporter"/>
    <property type="match status" value="1"/>
</dbReference>
<dbReference type="PROSITE" id="PS50850">
    <property type="entry name" value="MFS"/>
    <property type="match status" value="1"/>
</dbReference>
<proteinExistence type="inferred from homology"/>
<keyword id="KW-0997">Cell inner membrane</keyword>
<keyword id="KW-1003">Cell membrane</keyword>
<keyword id="KW-0472">Membrane</keyword>
<keyword id="KW-0762">Sugar transport</keyword>
<keyword id="KW-0812">Transmembrane</keyword>
<keyword id="KW-1133">Transmembrane helix</keyword>
<keyword id="KW-0813">Transport</keyword>